<feature type="chain" id="PRO_0000173118" description="Large ribosomal subunit protein bL31">
    <location>
        <begin position="1"/>
        <end position="75"/>
    </location>
</feature>
<feature type="binding site" evidence="1">
    <location>
        <position position="16"/>
    </location>
    <ligand>
        <name>Zn(2+)</name>
        <dbReference type="ChEBI" id="CHEBI:29105"/>
    </ligand>
</feature>
<feature type="binding site" evidence="1">
    <location>
        <position position="18"/>
    </location>
    <ligand>
        <name>Zn(2+)</name>
        <dbReference type="ChEBI" id="CHEBI:29105"/>
    </ligand>
</feature>
<feature type="binding site" evidence="1">
    <location>
        <position position="37"/>
    </location>
    <ligand>
        <name>Zn(2+)</name>
        <dbReference type="ChEBI" id="CHEBI:29105"/>
    </ligand>
</feature>
<feature type="binding site" evidence="1">
    <location>
        <position position="40"/>
    </location>
    <ligand>
        <name>Zn(2+)</name>
        <dbReference type="ChEBI" id="CHEBI:29105"/>
    </ligand>
</feature>
<protein>
    <recommendedName>
        <fullName evidence="1">Large ribosomal subunit protein bL31</fullName>
    </recommendedName>
    <alternativeName>
        <fullName evidence="2">50S ribosomal protein L31</fullName>
    </alternativeName>
</protein>
<proteinExistence type="inferred from homology"/>
<gene>
    <name evidence="1" type="primary">rpmE</name>
    <name type="ordered locus">lpp0704</name>
</gene>
<accession>Q5X7A1</accession>
<organism>
    <name type="scientific">Legionella pneumophila (strain Paris)</name>
    <dbReference type="NCBI Taxonomy" id="297246"/>
    <lineage>
        <taxon>Bacteria</taxon>
        <taxon>Pseudomonadati</taxon>
        <taxon>Pseudomonadota</taxon>
        <taxon>Gammaproteobacteria</taxon>
        <taxon>Legionellales</taxon>
        <taxon>Legionellaceae</taxon>
        <taxon>Legionella</taxon>
    </lineage>
</organism>
<evidence type="ECO:0000255" key="1">
    <source>
        <dbReference type="HAMAP-Rule" id="MF_00501"/>
    </source>
</evidence>
<evidence type="ECO:0000305" key="2"/>
<comment type="function">
    <text evidence="1">Binds the 23S rRNA.</text>
</comment>
<comment type="cofactor">
    <cofactor evidence="1">
        <name>Zn(2+)</name>
        <dbReference type="ChEBI" id="CHEBI:29105"/>
    </cofactor>
    <text evidence="1">Binds 1 zinc ion per subunit.</text>
</comment>
<comment type="subunit">
    <text evidence="1">Part of the 50S ribosomal subunit.</text>
</comment>
<comment type="similarity">
    <text evidence="1">Belongs to the bacterial ribosomal protein bL31 family. Type A subfamily.</text>
</comment>
<keyword id="KW-0479">Metal-binding</keyword>
<keyword id="KW-0687">Ribonucleoprotein</keyword>
<keyword id="KW-0689">Ribosomal protein</keyword>
<keyword id="KW-0694">RNA-binding</keyword>
<keyword id="KW-0699">rRNA-binding</keyword>
<keyword id="KW-0862">Zinc</keyword>
<name>RL31_LEGPA</name>
<sequence length="75" mass="8568">MKASVHPDYQTVKVTCSCGEVFETRSTLCKDLNIEVCSMCHPFYTGKQKLVDTGGRVQKFRDRYNMRTGQAKSKE</sequence>
<reference key="1">
    <citation type="journal article" date="2004" name="Nat. Genet.">
        <title>Evidence in the Legionella pneumophila genome for exploitation of host cell functions and high genome plasticity.</title>
        <authorList>
            <person name="Cazalet C."/>
            <person name="Rusniok C."/>
            <person name="Brueggemann H."/>
            <person name="Zidane N."/>
            <person name="Magnier A."/>
            <person name="Ma L."/>
            <person name="Tichit M."/>
            <person name="Jarraud S."/>
            <person name="Bouchier C."/>
            <person name="Vandenesch F."/>
            <person name="Kunst F."/>
            <person name="Etienne J."/>
            <person name="Glaser P."/>
            <person name="Buchrieser C."/>
        </authorList>
    </citation>
    <scope>NUCLEOTIDE SEQUENCE [LARGE SCALE GENOMIC DNA]</scope>
    <source>
        <strain>Paris</strain>
    </source>
</reference>
<dbReference type="EMBL" id="CR628336">
    <property type="protein sequence ID" value="CAH11852.1"/>
    <property type="molecule type" value="Genomic_DNA"/>
</dbReference>
<dbReference type="RefSeq" id="WP_010946387.1">
    <property type="nucleotide sequence ID" value="NC_006368.1"/>
</dbReference>
<dbReference type="SMR" id="Q5X7A1"/>
<dbReference type="GeneID" id="57034644"/>
<dbReference type="KEGG" id="lpp:lpp0704"/>
<dbReference type="LegioList" id="lpp0704"/>
<dbReference type="HOGENOM" id="CLU_114306_4_2_6"/>
<dbReference type="GO" id="GO:1990904">
    <property type="term" value="C:ribonucleoprotein complex"/>
    <property type="evidence" value="ECO:0007669"/>
    <property type="project" value="UniProtKB-KW"/>
</dbReference>
<dbReference type="GO" id="GO:0005840">
    <property type="term" value="C:ribosome"/>
    <property type="evidence" value="ECO:0007669"/>
    <property type="project" value="UniProtKB-KW"/>
</dbReference>
<dbReference type="GO" id="GO:0046872">
    <property type="term" value="F:metal ion binding"/>
    <property type="evidence" value="ECO:0007669"/>
    <property type="project" value="UniProtKB-KW"/>
</dbReference>
<dbReference type="GO" id="GO:0019843">
    <property type="term" value="F:rRNA binding"/>
    <property type="evidence" value="ECO:0007669"/>
    <property type="project" value="UniProtKB-KW"/>
</dbReference>
<dbReference type="GO" id="GO:0003735">
    <property type="term" value="F:structural constituent of ribosome"/>
    <property type="evidence" value="ECO:0007669"/>
    <property type="project" value="InterPro"/>
</dbReference>
<dbReference type="GO" id="GO:0006412">
    <property type="term" value="P:translation"/>
    <property type="evidence" value="ECO:0007669"/>
    <property type="project" value="UniProtKB-UniRule"/>
</dbReference>
<dbReference type="Gene3D" id="4.10.830.30">
    <property type="entry name" value="Ribosomal protein L31"/>
    <property type="match status" value="1"/>
</dbReference>
<dbReference type="HAMAP" id="MF_00501">
    <property type="entry name" value="Ribosomal_bL31_1"/>
    <property type="match status" value="1"/>
</dbReference>
<dbReference type="InterPro" id="IPR034704">
    <property type="entry name" value="Ribosomal_bL28/bL31-like_sf"/>
</dbReference>
<dbReference type="InterPro" id="IPR002150">
    <property type="entry name" value="Ribosomal_bL31"/>
</dbReference>
<dbReference type="InterPro" id="IPR027491">
    <property type="entry name" value="Ribosomal_bL31_A"/>
</dbReference>
<dbReference type="InterPro" id="IPR042105">
    <property type="entry name" value="Ribosomal_bL31_sf"/>
</dbReference>
<dbReference type="NCBIfam" id="TIGR00105">
    <property type="entry name" value="L31"/>
    <property type="match status" value="1"/>
</dbReference>
<dbReference type="NCBIfam" id="NF000612">
    <property type="entry name" value="PRK00019.1"/>
    <property type="match status" value="1"/>
</dbReference>
<dbReference type="NCBIfam" id="NF001809">
    <property type="entry name" value="PRK00528.1"/>
    <property type="match status" value="1"/>
</dbReference>
<dbReference type="PANTHER" id="PTHR33280">
    <property type="entry name" value="50S RIBOSOMAL PROTEIN L31, CHLOROPLASTIC"/>
    <property type="match status" value="1"/>
</dbReference>
<dbReference type="PANTHER" id="PTHR33280:SF6">
    <property type="entry name" value="LARGE RIBOSOMAL SUBUNIT PROTEIN BL31A"/>
    <property type="match status" value="1"/>
</dbReference>
<dbReference type="Pfam" id="PF01197">
    <property type="entry name" value="Ribosomal_L31"/>
    <property type="match status" value="1"/>
</dbReference>
<dbReference type="PRINTS" id="PR01249">
    <property type="entry name" value="RIBOSOMALL31"/>
</dbReference>
<dbReference type="SUPFAM" id="SSF143800">
    <property type="entry name" value="L28p-like"/>
    <property type="match status" value="1"/>
</dbReference>
<dbReference type="PROSITE" id="PS01143">
    <property type="entry name" value="RIBOSOMAL_L31"/>
    <property type="match status" value="1"/>
</dbReference>